<proteinExistence type="inferred from homology"/>
<reference key="1">
    <citation type="submission" date="2009-03" db="EMBL/GenBank/DDBJ databases">
        <title>Brucella melitensis ATCC 23457 whole genome shotgun sequencing project.</title>
        <authorList>
            <person name="Setubal J.C."/>
            <person name="Boyle S."/>
            <person name="Crasta O.R."/>
            <person name="Gillespie J.J."/>
            <person name="Kenyon R.W."/>
            <person name="Lu J."/>
            <person name="Mane S."/>
            <person name="Nagrani S."/>
            <person name="Shallom J.M."/>
            <person name="Shallom S."/>
            <person name="Shukla M."/>
            <person name="Snyder E.E."/>
            <person name="Sobral B.W."/>
            <person name="Wattam A.R."/>
            <person name="Will R."/>
            <person name="Williams K."/>
            <person name="Yoo H."/>
            <person name="Munk C."/>
            <person name="Tapia R."/>
            <person name="Han C."/>
            <person name="Detter J.C."/>
            <person name="Bruce D."/>
            <person name="Brettin T.S."/>
        </authorList>
    </citation>
    <scope>NUCLEOTIDE SEQUENCE [LARGE SCALE GENOMIC DNA]</scope>
    <source>
        <strain>ATCC 23457</strain>
    </source>
</reference>
<feature type="chain" id="PRO_1000149066" description="Phosphoribosyl-AMP cyclohydrolase">
    <location>
        <begin position="1"/>
        <end position="139"/>
    </location>
</feature>
<feature type="binding site" evidence="1">
    <location>
        <position position="91"/>
    </location>
    <ligand>
        <name>Mg(2+)</name>
        <dbReference type="ChEBI" id="CHEBI:18420"/>
    </ligand>
</feature>
<feature type="binding site" evidence="1">
    <location>
        <position position="92"/>
    </location>
    <ligand>
        <name>Zn(2+)</name>
        <dbReference type="ChEBI" id="CHEBI:29105"/>
        <note>ligand shared between dimeric partners</note>
    </ligand>
</feature>
<feature type="binding site" evidence="1">
    <location>
        <position position="93"/>
    </location>
    <ligand>
        <name>Mg(2+)</name>
        <dbReference type="ChEBI" id="CHEBI:18420"/>
    </ligand>
</feature>
<feature type="binding site" evidence="1">
    <location>
        <position position="95"/>
    </location>
    <ligand>
        <name>Mg(2+)</name>
        <dbReference type="ChEBI" id="CHEBI:18420"/>
    </ligand>
</feature>
<feature type="binding site" evidence="1">
    <location>
        <position position="110"/>
    </location>
    <ligand>
        <name>Zn(2+)</name>
        <dbReference type="ChEBI" id="CHEBI:29105"/>
        <note>ligand shared between dimeric partners</note>
    </ligand>
</feature>
<feature type="binding site" evidence="1">
    <location>
        <position position="117"/>
    </location>
    <ligand>
        <name>Zn(2+)</name>
        <dbReference type="ChEBI" id="CHEBI:29105"/>
        <note>ligand shared between dimeric partners</note>
    </ligand>
</feature>
<evidence type="ECO:0000255" key="1">
    <source>
        <dbReference type="HAMAP-Rule" id="MF_01021"/>
    </source>
</evidence>
<comment type="function">
    <text evidence="1">Catalyzes the hydrolysis of the adenine ring of phosphoribosyl-AMP.</text>
</comment>
<comment type="catalytic activity">
    <reaction evidence="1">
        <text>1-(5-phospho-beta-D-ribosyl)-5'-AMP + H2O = 1-(5-phospho-beta-D-ribosyl)-5-[(5-phospho-beta-D-ribosylamino)methylideneamino]imidazole-4-carboxamide</text>
        <dbReference type="Rhea" id="RHEA:20049"/>
        <dbReference type="ChEBI" id="CHEBI:15377"/>
        <dbReference type="ChEBI" id="CHEBI:58435"/>
        <dbReference type="ChEBI" id="CHEBI:59457"/>
        <dbReference type="EC" id="3.5.4.19"/>
    </reaction>
</comment>
<comment type="cofactor">
    <cofactor evidence="1">
        <name>Mg(2+)</name>
        <dbReference type="ChEBI" id="CHEBI:18420"/>
    </cofactor>
    <text evidence="1">Binds 1 Mg(2+) ion per subunit.</text>
</comment>
<comment type="cofactor">
    <cofactor evidence="1">
        <name>Zn(2+)</name>
        <dbReference type="ChEBI" id="CHEBI:29105"/>
    </cofactor>
    <text evidence="1">Binds 1 zinc ion per subunit.</text>
</comment>
<comment type="pathway">
    <text evidence="1">Amino-acid biosynthesis; L-histidine biosynthesis; L-histidine from 5-phospho-alpha-D-ribose 1-diphosphate: step 3/9.</text>
</comment>
<comment type="subunit">
    <text evidence="1">Homodimer.</text>
</comment>
<comment type="subcellular location">
    <subcellularLocation>
        <location evidence="1">Cytoplasm</location>
    </subcellularLocation>
</comment>
<comment type="similarity">
    <text evidence="1">Belongs to the PRA-CH family.</text>
</comment>
<name>HIS3_BRUMB</name>
<sequence>MSIFPAQPSDKKAVEEGAAFMPRFDASGLITAIVTDARDGELLMVAHMNEEALRLTLETGIAHYWSRSRKTLWKKGETSGNLQSVVELRTDCDQDALWLKVHVAGDGPTCHTGRRSCFYRQVVSSGGKVALTMASDHDQ</sequence>
<protein>
    <recommendedName>
        <fullName evidence="1">Phosphoribosyl-AMP cyclohydrolase</fullName>
        <shortName evidence="1">PRA-CH</shortName>
        <ecNumber evidence="1">3.5.4.19</ecNumber>
    </recommendedName>
</protein>
<keyword id="KW-0028">Amino-acid biosynthesis</keyword>
<keyword id="KW-0963">Cytoplasm</keyword>
<keyword id="KW-0368">Histidine biosynthesis</keyword>
<keyword id="KW-0378">Hydrolase</keyword>
<keyword id="KW-0460">Magnesium</keyword>
<keyword id="KW-0479">Metal-binding</keyword>
<keyword id="KW-0862">Zinc</keyword>
<organism>
    <name type="scientific">Brucella melitensis biotype 2 (strain ATCC 23457)</name>
    <dbReference type="NCBI Taxonomy" id="546272"/>
    <lineage>
        <taxon>Bacteria</taxon>
        <taxon>Pseudomonadati</taxon>
        <taxon>Pseudomonadota</taxon>
        <taxon>Alphaproteobacteria</taxon>
        <taxon>Hyphomicrobiales</taxon>
        <taxon>Brucellaceae</taxon>
        <taxon>Brucella/Ochrobactrum group</taxon>
        <taxon>Brucella</taxon>
    </lineage>
</organism>
<dbReference type="EC" id="3.5.4.19" evidence="1"/>
<dbReference type="EMBL" id="CP001488">
    <property type="protein sequence ID" value="ACO00856.1"/>
    <property type="molecule type" value="Genomic_DNA"/>
</dbReference>
<dbReference type="RefSeq" id="WP_002966830.1">
    <property type="nucleotide sequence ID" value="NC_012441.1"/>
</dbReference>
<dbReference type="SMR" id="C0RJ48"/>
<dbReference type="GeneID" id="97533666"/>
<dbReference type="KEGG" id="bmi:BMEA_A1117"/>
<dbReference type="HOGENOM" id="CLU_048577_5_0_5"/>
<dbReference type="UniPathway" id="UPA00031">
    <property type="reaction ID" value="UER00008"/>
</dbReference>
<dbReference type="Proteomes" id="UP000001748">
    <property type="component" value="Chromosome I"/>
</dbReference>
<dbReference type="GO" id="GO:0005737">
    <property type="term" value="C:cytoplasm"/>
    <property type="evidence" value="ECO:0007669"/>
    <property type="project" value="UniProtKB-SubCell"/>
</dbReference>
<dbReference type="GO" id="GO:0000287">
    <property type="term" value="F:magnesium ion binding"/>
    <property type="evidence" value="ECO:0007669"/>
    <property type="project" value="UniProtKB-UniRule"/>
</dbReference>
<dbReference type="GO" id="GO:0004635">
    <property type="term" value="F:phosphoribosyl-AMP cyclohydrolase activity"/>
    <property type="evidence" value="ECO:0007669"/>
    <property type="project" value="UniProtKB-UniRule"/>
</dbReference>
<dbReference type="GO" id="GO:0008270">
    <property type="term" value="F:zinc ion binding"/>
    <property type="evidence" value="ECO:0007669"/>
    <property type="project" value="UniProtKB-UniRule"/>
</dbReference>
<dbReference type="GO" id="GO:0000105">
    <property type="term" value="P:L-histidine biosynthetic process"/>
    <property type="evidence" value="ECO:0007669"/>
    <property type="project" value="UniProtKB-UniRule"/>
</dbReference>
<dbReference type="FunFam" id="3.10.20.810:FF:000001">
    <property type="entry name" value="Histidine biosynthesis bifunctional protein HisIE"/>
    <property type="match status" value="1"/>
</dbReference>
<dbReference type="Gene3D" id="4.10.80.70">
    <property type="match status" value="1"/>
</dbReference>
<dbReference type="Gene3D" id="3.10.20.810">
    <property type="entry name" value="Phosphoribosyl-AMP cyclohydrolase"/>
    <property type="match status" value="1"/>
</dbReference>
<dbReference type="HAMAP" id="MF_01021">
    <property type="entry name" value="HisI"/>
    <property type="match status" value="1"/>
</dbReference>
<dbReference type="InterPro" id="IPR026660">
    <property type="entry name" value="PRA-CH"/>
</dbReference>
<dbReference type="InterPro" id="IPR002496">
    <property type="entry name" value="PRib_AMP_CycHydrolase_dom"/>
</dbReference>
<dbReference type="InterPro" id="IPR038019">
    <property type="entry name" value="PRib_AMP_CycHydrolase_sf"/>
</dbReference>
<dbReference type="NCBIfam" id="NF000768">
    <property type="entry name" value="PRK00051.1"/>
    <property type="match status" value="1"/>
</dbReference>
<dbReference type="PANTHER" id="PTHR42945">
    <property type="entry name" value="HISTIDINE BIOSYNTHESIS BIFUNCTIONAL PROTEIN"/>
    <property type="match status" value="1"/>
</dbReference>
<dbReference type="PANTHER" id="PTHR42945:SF1">
    <property type="entry name" value="HISTIDINE BIOSYNTHESIS BIFUNCTIONAL PROTEIN HIS7"/>
    <property type="match status" value="1"/>
</dbReference>
<dbReference type="Pfam" id="PF01502">
    <property type="entry name" value="PRA-CH"/>
    <property type="match status" value="1"/>
</dbReference>
<dbReference type="SUPFAM" id="SSF141734">
    <property type="entry name" value="HisI-like"/>
    <property type="match status" value="1"/>
</dbReference>
<gene>
    <name evidence="1" type="primary">hisI</name>
    <name type="ordered locus">BMEA_A1117</name>
</gene>
<accession>C0RJ48</accession>